<gene>
    <name type="primary">ycgT</name>
    <name type="ordered locus">BSU03270</name>
</gene>
<protein>
    <recommendedName>
        <fullName evidence="1">Ferredoxin--NADP reductase 1</fullName>
        <shortName evidence="1">FNR 1</shortName>
        <shortName evidence="1">Fd-NADP(+) reductase 1</shortName>
        <ecNumber evidence="1">1.18.1.2</ecNumber>
    </recommendedName>
</protein>
<sequence length="336" mass="36967">MAENQEVYDVTIIGGGPIGLFTAFYCGMRELKTKVIEFLPKLGGKVSLFFPEKIIRDIGGIPGIAGKQLIEQLKEQAATFDPDIVLNQRVTGFERLDDGTIVLTGSEGKKHYTRTVILACGMGTLEVNEFDSEDAARYAGKNLHYGVEKLDAFKGKRVVISGGGDTAVDWANELEPIAASVTVVHRREEFGGMESSVTKMKQSSVRVLTPYRLEQLNGDEEGIKSVTVCHTESGQRKDIEIDELIINHGFKIDLGPMMEWGLEIEEGRVKADRHMRTNLPGVFVAGDAAFYESKLRLIAGGFTEGPTAVNSAKAYLDPKAENMAMYSTHHKKLVHK</sequence>
<proteinExistence type="evidence at protein level"/>
<dbReference type="EC" id="1.18.1.2" evidence="1"/>
<dbReference type="EMBL" id="D50453">
    <property type="protein sequence ID" value="BAA08961.1"/>
    <property type="status" value="ALT_FRAME"/>
    <property type="molecule type" value="Genomic_DNA"/>
</dbReference>
<dbReference type="EMBL" id="AL009126">
    <property type="protein sequence ID" value="CAB12121.1"/>
    <property type="molecule type" value="Genomic_DNA"/>
</dbReference>
<dbReference type="PIR" id="G69759">
    <property type="entry name" value="G69759"/>
</dbReference>
<dbReference type="PDB" id="5XHU">
    <property type="method" value="X-ray"/>
    <property type="resolution" value="2.10 A"/>
    <property type="chains" value="A=6-334"/>
</dbReference>
<dbReference type="PDBsum" id="5XHU"/>
<dbReference type="SMR" id="O31475"/>
<dbReference type="FunCoup" id="O31475">
    <property type="interactions" value="36"/>
</dbReference>
<dbReference type="STRING" id="224308.BSU03270"/>
<dbReference type="PaxDb" id="224308-BSU03270"/>
<dbReference type="EnsemblBacteria" id="CAB12121">
    <property type="protein sequence ID" value="CAB12121"/>
    <property type="gene ID" value="BSU_03270"/>
</dbReference>
<dbReference type="GeneID" id="938327"/>
<dbReference type="KEGG" id="bsu:BSU03270"/>
<dbReference type="PATRIC" id="fig|224308.179.peg.341"/>
<dbReference type="eggNOG" id="COG0492">
    <property type="taxonomic scope" value="Bacteria"/>
</dbReference>
<dbReference type="InParanoid" id="O31475"/>
<dbReference type="OrthoDB" id="9806179at2"/>
<dbReference type="PhylomeDB" id="O31475"/>
<dbReference type="BioCyc" id="BSUB:BSU03270-MONOMER"/>
<dbReference type="Proteomes" id="UP000001570">
    <property type="component" value="Chromosome"/>
</dbReference>
<dbReference type="GO" id="GO:0004324">
    <property type="term" value="F:ferredoxin-NADP+ reductase activity"/>
    <property type="evidence" value="ECO:0007669"/>
    <property type="project" value="UniProtKB-UniRule"/>
</dbReference>
<dbReference type="GO" id="GO:0050660">
    <property type="term" value="F:flavin adenine dinucleotide binding"/>
    <property type="evidence" value="ECO:0007669"/>
    <property type="project" value="UniProtKB-UniRule"/>
</dbReference>
<dbReference type="GO" id="GO:0050661">
    <property type="term" value="F:NADP binding"/>
    <property type="evidence" value="ECO:0007669"/>
    <property type="project" value="UniProtKB-UniRule"/>
</dbReference>
<dbReference type="GO" id="GO:0004791">
    <property type="term" value="F:thioredoxin-disulfide reductase (NADPH) activity"/>
    <property type="evidence" value="ECO:0000318"/>
    <property type="project" value="GO_Central"/>
</dbReference>
<dbReference type="GO" id="GO:0045454">
    <property type="term" value="P:cell redox homeostasis"/>
    <property type="evidence" value="ECO:0000318"/>
    <property type="project" value="GO_Central"/>
</dbReference>
<dbReference type="GO" id="GO:0071281">
    <property type="term" value="P:cellular response to iron ion"/>
    <property type="evidence" value="ECO:0000314"/>
    <property type="project" value="CollecTF"/>
</dbReference>
<dbReference type="Gene3D" id="3.50.50.60">
    <property type="entry name" value="FAD/NAD(P)-binding domain"/>
    <property type="match status" value="2"/>
</dbReference>
<dbReference type="HAMAP" id="MF_01685">
    <property type="entry name" value="FENR2"/>
    <property type="match status" value="1"/>
</dbReference>
<dbReference type="InterPro" id="IPR036188">
    <property type="entry name" value="FAD/NAD-bd_sf"/>
</dbReference>
<dbReference type="InterPro" id="IPR023753">
    <property type="entry name" value="FAD/NAD-binding_dom"/>
</dbReference>
<dbReference type="InterPro" id="IPR022890">
    <property type="entry name" value="Fd--NADP_Rdtase_type_2"/>
</dbReference>
<dbReference type="InterPro" id="IPR050097">
    <property type="entry name" value="Ferredoxin-NADP_redctase_2"/>
</dbReference>
<dbReference type="PANTHER" id="PTHR48105">
    <property type="entry name" value="THIOREDOXIN REDUCTASE 1-RELATED-RELATED"/>
    <property type="match status" value="1"/>
</dbReference>
<dbReference type="Pfam" id="PF07992">
    <property type="entry name" value="Pyr_redox_2"/>
    <property type="match status" value="1"/>
</dbReference>
<dbReference type="PRINTS" id="PR00368">
    <property type="entry name" value="FADPNR"/>
</dbReference>
<dbReference type="PRINTS" id="PR00469">
    <property type="entry name" value="PNDRDTASEII"/>
</dbReference>
<dbReference type="SUPFAM" id="SSF51905">
    <property type="entry name" value="FAD/NAD(P)-binding domain"/>
    <property type="match status" value="1"/>
</dbReference>
<accession>O31475</accession>
<accession>P94397</accession>
<evidence type="ECO:0000255" key="1">
    <source>
        <dbReference type="HAMAP-Rule" id="MF_01685"/>
    </source>
</evidence>
<evidence type="ECO:0000305" key="2"/>
<evidence type="ECO:0007829" key="3">
    <source>
        <dbReference type="PDB" id="5XHU"/>
    </source>
</evidence>
<organism>
    <name type="scientific">Bacillus subtilis (strain 168)</name>
    <dbReference type="NCBI Taxonomy" id="224308"/>
    <lineage>
        <taxon>Bacteria</taxon>
        <taxon>Bacillati</taxon>
        <taxon>Bacillota</taxon>
        <taxon>Bacilli</taxon>
        <taxon>Bacillales</taxon>
        <taxon>Bacillaceae</taxon>
        <taxon>Bacillus</taxon>
    </lineage>
</organism>
<comment type="catalytic activity">
    <reaction evidence="1">
        <text>2 reduced [2Fe-2S]-[ferredoxin] + NADP(+) + H(+) = 2 oxidized [2Fe-2S]-[ferredoxin] + NADPH</text>
        <dbReference type="Rhea" id="RHEA:20125"/>
        <dbReference type="Rhea" id="RHEA-COMP:10000"/>
        <dbReference type="Rhea" id="RHEA-COMP:10001"/>
        <dbReference type="ChEBI" id="CHEBI:15378"/>
        <dbReference type="ChEBI" id="CHEBI:33737"/>
        <dbReference type="ChEBI" id="CHEBI:33738"/>
        <dbReference type="ChEBI" id="CHEBI:57783"/>
        <dbReference type="ChEBI" id="CHEBI:58349"/>
        <dbReference type="EC" id="1.18.1.2"/>
    </reaction>
</comment>
<comment type="cofactor">
    <cofactor evidence="1">
        <name>FAD</name>
        <dbReference type="ChEBI" id="CHEBI:57692"/>
    </cofactor>
    <text evidence="1">Binds 1 FAD per subunit.</text>
</comment>
<comment type="subunit">
    <text evidence="1">Homodimer.</text>
</comment>
<comment type="similarity">
    <text evidence="1">Belongs to the ferredoxin--NADP reductase type 2 family.</text>
</comment>
<comment type="sequence caution" evidence="2">
    <conflict type="frameshift">
        <sequence resource="EMBL-CDS" id="BAA08961"/>
    </conflict>
</comment>
<name>FENR1_BACSU</name>
<feature type="chain" id="PRO_0000364801" description="Ferredoxin--NADP reductase 1">
    <location>
        <begin position="1"/>
        <end position="336"/>
    </location>
</feature>
<feature type="binding site" evidence="1">
    <location>
        <position position="37"/>
    </location>
    <ligand>
        <name>FAD</name>
        <dbReference type="ChEBI" id="CHEBI:57692"/>
    </ligand>
</feature>
<feature type="binding site" evidence="1">
    <location>
        <position position="45"/>
    </location>
    <ligand>
        <name>FAD</name>
        <dbReference type="ChEBI" id="CHEBI:57692"/>
    </ligand>
</feature>
<feature type="binding site" evidence="1">
    <location>
        <position position="50"/>
    </location>
    <ligand>
        <name>FAD</name>
        <dbReference type="ChEBI" id="CHEBI:57692"/>
    </ligand>
</feature>
<feature type="binding site" evidence="1">
    <location>
        <position position="90"/>
    </location>
    <ligand>
        <name>FAD</name>
        <dbReference type="ChEBI" id="CHEBI:57692"/>
    </ligand>
</feature>
<feature type="binding site" evidence="1">
    <location>
        <position position="125"/>
    </location>
    <ligand>
        <name>FAD</name>
        <dbReference type="ChEBI" id="CHEBI:57692"/>
    </ligand>
</feature>
<feature type="binding site" evidence="1">
    <location>
        <position position="287"/>
    </location>
    <ligand>
        <name>FAD</name>
        <dbReference type="ChEBI" id="CHEBI:57692"/>
    </ligand>
</feature>
<feature type="binding site" evidence="1">
    <location>
        <position position="328"/>
    </location>
    <ligand>
        <name>FAD</name>
        <dbReference type="ChEBI" id="CHEBI:57692"/>
    </ligand>
</feature>
<feature type="strand" evidence="3">
    <location>
        <begin position="7"/>
        <end position="13"/>
    </location>
</feature>
<feature type="helix" evidence="3">
    <location>
        <begin position="17"/>
        <end position="28"/>
    </location>
</feature>
<feature type="strand" evidence="3">
    <location>
        <begin position="33"/>
        <end position="36"/>
    </location>
</feature>
<feature type="strand" evidence="3">
    <location>
        <begin position="38"/>
        <end position="42"/>
    </location>
</feature>
<feature type="helix" evidence="3">
    <location>
        <begin position="44"/>
        <end position="49"/>
    </location>
</feature>
<feature type="strand" evidence="3">
    <location>
        <begin position="53"/>
        <end position="55"/>
    </location>
</feature>
<feature type="helix" evidence="3">
    <location>
        <begin position="66"/>
        <end position="78"/>
    </location>
</feature>
<feature type="strand" evidence="3">
    <location>
        <begin position="83"/>
        <end position="85"/>
    </location>
</feature>
<feature type="strand" evidence="3">
    <location>
        <begin position="90"/>
        <end position="95"/>
    </location>
</feature>
<feature type="strand" evidence="3">
    <location>
        <begin position="101"/>
        <end position="105"/>
    </location>
</feature>
<feature type="strand" evidence="3">
    <location>
        <begin position="110"/>
        <end position="118"/>
    </location>
</feature>
<feature type="helix" evidence="3">
    <location>
        <begin position="132"/>
        <end position="138"/>
    </location>
</feature>
<feature type="turn" evidence="3">
    <location>
        <begin position="139"/>
        <end position="142"/>
    </location>
</feature>
<feature type="strand" evidence="3">
    <location>
        <begin position="143"/>
        <end position="146"/>
    </location>
</feature>
<feature type="helix" evidence="3">
    <location>
        <begin position="150"/>
        <end position="153"/>
    </location>
</feature>
<feature type="strand" evidence="3">
    <location>
        <begin position="157"/>
        <end position="161"/>
    </location>
</feature>
<feature type="helix" evidence="3">
    <location>
        <begin position="165"/>
        <end position="174"/>
    </location>
</feature>
<feature type="turn" evidence="3">
    <location>
        <begin position="175"/>
        <end position="177"/>
    </location>
</feature>
<feature type="strand" evidence="3">
    <location>
        <begin position="178"/>
        <end position="184"/>
    </location>
</feature>
<feature type="strand" evidence="3">
    <location>
        <begin position="186"/>
        <end position="188"/>
    </location>
</feature>
<feature type="helix" evidence="3">
    <location>
        <begin position="194"/>
        <end position="202"/>
    </location>
</feature>
<feature type="strand" evidence="3">
    <location>
        <begin position="206"/>
        <end position="208"/>
    </location>
</feature>
<feature type="strand" evidence="3">
    <location>
        <begin position="211"/>
        <end position="218"/>
    </location>
</feature>
<feature type="strand" evidence="3">
    <location>
        <begin position="223"/>
        <end position="230"/>
    </location>
</feature>
<feature type="turn" evidence="3">
    <location>
        <begin position="231"/>
        <end position="233"/>
    </location>
</feature>
<feature type="strand" evidence="3">
    <location>
        <begin position="236"/>
        <end position="240"/>
    </location>
</feature>
<feature type="strand" evidence="3">
    <location>
        <begin position="242"/>
        <end position="246"/>
    </location>
</feature>
<feature type="helix" evidence="3">
    <location>
        <begin position="255"/>
        <end position="259"/>
    </location>
</feature>
<feature type="strand" evidence="3">
    <location>
        <begin position="268"/>
        <end position="270"/>
    </location>
</feature>
<feature type="strand" evidence="3">
    <location>
        <begin position="282"/>
        <end position="284"/>
    </location>
</feature>
<feature type="helix" evidence="3">
    <location>
        <begin position="286"/>
        <end position="288"/>
    </location>
</feature>
<feature type="helix" evidence="3">
    <location>
        <begin position="298"/>
        <end position="316"/>
    </location>
</feature>
<feature type="helix" evidence="3">
    <location>
        <begin position="327"/>
        <end position="329"/>
    </location>
</feature>
<feature type="turn" evidence="3">
    <location>
        <begin position="331"/>
        <end position="333"/>
    </location>
</feature>
<reference key="1">
    <citation type="journal article" date="1996" name="Microbiology">
        <title>The 25 degrees-36 degrees region of the Bacillus subtilis chromosome: determination of the sequence of a 146 kb segment and identification of 113 genes.</title>
        <authorList>
            <person name="Yamane K."/>
            <person name="Kumano M."/>
            <person name="Kurita K."/>
        </authorList>
    </citation>
    <scope>NUCLEOTIDE SEQUENCE [GENOMIC DNA]</scope>
    <source>
        <strain>168</strain>
    </source>
</reference>
<reference key="2">
    <citation type="journal article" date="1997" name="Nature">
        <title>The complete genome sequence of the Gram-positive bacterium Bacillus subtilis.</title>
        <authorList>
            <person name="Kunst F."/>
            <person name="Ogasawara N."/>
            <person name="Moszer I."/>
            <person name="Albertini A.M."/>
            <person name="Alloni G."/>
            <person name="Azevedo V."/>
            <person name="Bertero M.G."/>
            <person name="Bessieres P."/>
            <person name="Bolotin A."/>
            <person name="Borchert S."/>
            <person name="Borriss R."/>
            <person name="Boursier L."/>
            <person name="Brans A."/>
            <person name="Braun M."/>
            <person name="Brignell S.C."/>
            <person name="Bron S."/>
            <person name="Brouillet S."/>
            <person name="Bruschi C.V."/>
            <person name="Caldwell B."/>
            <person name="Capuano V."/>
            <person name="Carter N.M."/>
            <person name="Choi S.-K."/>
            <person name="Codani J.-J."/>
            <person name="Connerton I.F."/>
            <person name="Cummings N.J."/>
            <person name="Daniel R.A."/>
            <person name="Denizot F."/>
            <person name="Devine K.M."/>
            <person name="Duesterhoeft A."/>
            <person name="Ehrlich S.D."/>
            <person name="Emmerson P.T."/>
            <person name="Entian K.-D."/>
            <person name="Errington J."/>
            <person name="Fabret C."/>
            <person name="Ferrari E."/>
            <person name="Foulger D."/>
            <person name="Fritz C."/>
            <person name="Fujita M."/>
            <person name="Fujita Y."/>
            <person name="Fuma S."/>
            <person name="Galizzi A."/>
            <person name="Galleron N."/>
            <person name="Ghim S.-Y."/>
            <person name="Glaser P."/>
            <person name="Goffeau A."/>
            <person name="Golightly E.J."/>
            <person name="Grandi G."/>
            <person name="Guiseppi G."/>
            <person name="Guy B.J."/>
            <person name="Haga K."/>
            <person name="Haiech J."/>
            <person name="Harwood C.R."/>
            <person name="Henaut A."/>
            <person name="Hilbert H."/>
            <person name="Holsappel S."/>
            <person name="Hosono S."/>
            <person name="Hullo M.-F."/>
            <person name="Itaya M."/>
            <person name="Jones L.-M."/>
            <person name="Joris B."/>
            <person name="Karamata D."/>
            <person name="Kasahara Y."/>
            <person name="Klaerr-Blanchard M."/>
            <person name="Klein C."/>
            <person name="Kobayashi Y."/>
            <person name="Koetter P."/>
            <person name="Koningstein G."/>
            <person name="Krogh S."/>
            <person name="Kumano M."/>
            <person name="Kurita K."/>
            <person name="Lapidus A."/>
            <person name="Lardinois S."/>
            <person name="Lauber J."/>
            <person name="Lazarevic V."/>
            <person name="Lee S.-M."/>
            <person name="Levine A."/>
            <person name="Liu H."/>
            <person name="Masuda S."/>
            <person name="Mauel C."/>
            <person name="Medigue C."/>
            <person name="Medina N."/>
            <person name="Mellado R.P."/>
            <person name="Mizuno M."/>
            <person name="Moestl D."/>
            <person name="Nakai S."/>
            <person name="Noback M."/>
            <person name="Noone D."/>
            <person name="O'Reilly M."/>
            <person name="Ogawa K."/>
            <person name="Ogiwara A."/>
            <person name="Oudega B."/>
            <person name="Park S.-H."/>
            <person name="Parro V."/>
            <person name="Pohl T.M."/>
            <person name="Portetelle D."/>
            <person name="Porwollik S."/>
            <person name="Prescott A.M."/>
            <person name="Presecan E."/>
            <person name="Pujic P."/>
            <person name="Purnelle B."/>
            <person name="Rapoport G."/>
            <person name="Rey M."/>
            <person name="Reynolds S."/>
            <person name="Rieger M."/>
            <person name="Rivolta C."/>
            <person name="Rocha E."/>
            <person name="Roche B."/>
            <person name="Rose M."/>
            <person name="Sadaie Y."/>
            <person name="Sato T."/>
            <person name="Scanlan E."/>
            <person name="Schleich S."/>
            <person name="Schroeter R."/>
            <person name="Scoffone F."/>
            <person name="Sekiguchi J."/>
            <person name="Sekowska A."/>
            <person name="Seror S.J."/>
            <person name="Serror P."/>
            <person name="Shin B.-S."/>
            <person name="Soldo B."/>
            <person name="Sorokin A."/>
            <person name="Tacconi E."/>
            <person name="Takagi T."/>
            <person name="Takahashi H."/>
            <person name="Takemaru K."/>
            <person name="Takeuchi M."/>
            <person name="Tamakoshi A."/>
            <person name="Tanaka T."/>
            <person name="Terpstra P."/>
            <person name="Tognoni A."/>
            <person name="Tosato V."/>
            <person name="Uchiyama S."/>
            <person name="Vandenbol M."/>
            <person name="Vannier F."/>
            <person name="Vassarotti A."/>
            <person name="Viari A."/>
            <person name="Wambutt R."/>
            <person name="Wedler E."/>
            <person name="Wedler H."/>
            <person name="Weitzenegger T."/>
            <person name="Winters P."/>
            <person name="Wipat A."/>
            <person name="Yamamoto H."/>
            <person name="Yamane K."/>
            <person name="Yasumoto K."/>
            <person name="Yata K."/>
            <person name="Yoshida K."/>
            <person name="Yoshikawa H.-F."/>
            <person name="Zumstein E."/>
            <person name="Yoshikawa H."/>
            <person name="Danchin A."/>
        </authorList>
    </citation>
    <scope>NUCLEOTIDE SEQUENCE [LARGE SCALE GENOMIC DNA]</scope>
    <source>
        <strain>168</strain>
    </source>
</reference>
<keyword id="KW-0002">3D-structure</keyword>
<keyword id="KW-0274">FAD</keyword>
<keyword id="KW-0285">Flavoprotein</keyword>
<keyword id="KW-0521">NADP</keyword>
<keyword id="KW-0560">Oxidoreductase</keyword>
<keyword id="KW-1185">Reference proteome</keyword>